<proteinExistence type="inferred from homology"/>
<evidence type="ECO:0000255" key="1">
    <source>
        <dbReference type="HAMAP-Rule" id="MF_00337"/>
    </source>
</evidence>
<dbReference type="EC" id="3.1.11.6" evidence="1"/>
<dbReference type="EMBL" id="AM406670">
    <property type="protein sequence ID" value="CAL93817.1"/>
    <property type="molecule type" value="Genomic_DNA"/>
</dbReference>
<dbReference type="RefSeq" id="WP_011764933.1">
    <property type="nucleotide sequence ID" value="NC_008702.1"/>
</dbReference>
<dbReference type="SMR" id="A1K4R2"/>
<dbReference type="STRING" id="62928.azo1200"/>
<dbReference type="KEGG" id="azo:azo1200"/>
<dbReference type="eggNOG" id="COG1722">
    <property type="taxonomic scope" value="Bacteria"/>
</dbReference>
<dbReference type="HOGENOM" id="CLU_145918_2_0_4"/>
<dbReference type="Proteomes" id="UP000002588">
    <property type="component" value="Chromosome"/>
</dbReference>
<dbReference type="GO" id="GO:0005829">
    <property type="term" value="C:cytosol"/>
    <property type="evidence" value="ECO:0007669"/>
    <property type="project" value="TreeGrafter"/>
</dbReference>
<dbReference type="GO" id="GO:0009318">
    <property type="term" value="C:exodeoxyribonuclease VII complex"/>
    <property type="evidence" value="ECO:0007669"/>
    <property type="project" value="InterPro"/>
</dbReference>
<dbReference type="GO" id="GO:0008855">
    <property type="term" value="F:exodeoxyribonuclease VII activity"/>
    <property type="evidence" value="ECO:0007669"/>
    <property type="project" value="UniProtKB-UniRule"/>
</dbReference>
<dbReference type="GO" id="GO:0006308">
    <property type="term" value="P:DNA catabolic process"/>
    <property type="evidence" value="ECO:0007669"/>
    <property type="project" value="UniProtKB-UniRule"/>
</dbReference>
<dbReference type="Gene3D" id="1.10.287.1040">
    <property type="entry name" value="Exonuclease VII, small subunit"/>
    <property type="match status" value="1"/>
</dbReference>
<dbReference type="HAMAP" id="MF_00337">
    <property type="entry name" value="Exonuc_7_S"/>
    <property type="match status" value="1"/>
</dbReference>
<dbReference type="InterPro" id="IPR003761">
    <property type="entry name" value="Exonuc_VII_S"/>
</dbReference>
<dbReference type="InterPro" id="IPR037004">
    <property type="entry name" value="Exonuc_VII_ssu_sf"/>
</dbReference>
<dbReference type="NCBIfam" id="NF002140">
    <property type="entry name" value="PRK00977.1-4"/>
    <property type="match status" value="1"/>
</dbReference>
<dbReference type="NCBIfam" id="NF002141">
    <property type="entry name" value="PRK00977.1-5"/>
    <property type="match status" value="1"/>
</dbReference>
<dbReference type="NCBIfam" id="TIGR01280">
    <property type="entry name" value="xseB"/>
    <property type="match status" value="1"/>
</dbReference>
<dbReference type="PANTHER" id="PTHR34137">
    <property type="entry name" value="EXODEOXYRIBONUCLEASE 7 SMALL SUBUNIT"/>
    <property type="match status" value="1"/>
</dbReference>
<dbReference type="PANTHER" id="PTHR34137:SF1">
    <property type="entry name" value="EXODEOXYRIBONUCLEASE 7 SMALL SUBUNIT"/>
    <property type="match status" value="1"/>
</dbReference>
<dbReference type="Pfam" id="PF02609">
    <property type="entry name" value="Exonuc_VII_S"/>
    <property type="match status" value="1"/>
</dbReference>
<dbReference type="PIRSF" id="PIRSF006488">
    <property type="entry name" value="Exonuc_VII_S"/>
    <property type="match status" value="1"/>
</dbReference>
<dbReference type="SUPFAM" id="SSF116842">
    <property type="entry name" value="XseB-like"/>
    <property type="match status" value="1"/>
</dbReference>
<comment type="function">
    <text evidence="1">Bidirectionally degrades single-stranded DNA into large acid-insoluble oligonucleotides, which are then degraded further into small acid-soluble oligonucleotides.</text>
</comment>
<comment type="catalytic activity">
    <reaction evidence="1">
        <text>Exonucleolytic cleavage in either 5'- to 3'- or 3'- to 5'-direction to yield nucleoside 5'-phosphates.</text>
        <dbReference type="EC" id="3.1.11.6"/>
    </reaction>
</comment>
<comment type="subunit">
    <text evidence="1">Heterooligomer composed of large and small subunits.</text>
</comment>
<comment type="subcellular location">
    <subcellularLocation>
        <location evidence="1">Cytoplasm</location>
    </subcellularLocation>
</comment>
<comment type="similarity">
    <text evidence="1">Belongs to the XseB family.</text>
</comment>
<feature type="chain" id="PRO_0000303688" description="Exodeoxyribonuclease 7 small subunit">
    <location>
        <begin position="1"/>
        <end position="84"/>
    </location>
</feature>
<gene>
    <name evidence="1" type="primary">xseB</name>
    <name type="ordered locus">azo1200</name>
</gene>
<keyword id="KW-0963">Cytoplasm</keyword>
<keyword id="KW-0269">Exonuclease</keyword>
<keyword id="KW-0378">Hydrolase</keyword>
<keyword id="KW-0540">Nuclease</keyword>
<keyword id="KW-1185">Reference proteome</keyword>
<reference key="1">
    <citation type="journal article" date="2006" name="Nat. Biotechnol.">
        <title>Complete genome of the mutualistic, N2-fixing grass endophyte Azoarcus sp. strain BH72.</title>
        <authorList>
            <person name="Krause A."/>
            <person name="Ramakumar A."/>
            <person name="Bartels D."/>
            <person name="Battistoni F."/>
            <person name="Bekel T."/>
            <person name="Boch J."/>
            <person name="Boehm M."/>
            <person name="Friedrich F."/>
            <person name="Hurek T."/>
            <person name="Krause L."/>
            <person name="Linke B."/>
            <person name="McHardy A.C."/>
            <person name="Sarkar A."/>
            <person name="Schneiker S."/>
            <person name="Syed A.A."/>
            <person name="Thauer R."/>
            <person name="Vorhoelter F.-J."/>
            <person name="Weidner S."/>
            <person name="Puehler A."/>
            <person name="Reinhold-Hurek B."/>
            <person name="Kaiser O."/>
            <person name="Goesmann A."/>
        </authorList>
    </citation>
    <scope>NUCLEOTIDE SEQUENCE [LARGE SCALE GENOMIC DNA]</scope>
    <source>
        <strain>BH72</strain>
    </source>
</reference>
<protein>
    <recommendedName>
        <fullName evidence="1">Exodeoxyribonuclease 7 small subunit</fullName>
        <ecNumber evidence="1">3.1.11.6</ecNumber>
    </recommendedName>
    <alternativeName>
        <fullName evidence="1">Exodeoxyribonuclease VII small subunit</fullName>
        <shortName evidence="1">Exonuclease VII small subunit</shortName>
    </alternativeName>
</protein>
<sequence length="84" mass="9098">MPKPASSPTSFEAAVAELETIVQQMESGQLSLEDALARYQRGVGLLKFCQETLSGAEQRIRQLEGGELVELRIDTNADGSQECA</sequence>
<name>EX7S_AZOSB</name>
<accession>A1K4R2</accession>
<organism>
    <name type="scientific">Azoarcus sp. (strain BH72)</name>
    <dbReference type="NCBI Taxonomy" id="418699"/>
    <lineage>
        <taxon>Bacteria</taxon>
        <taxon>Pseudomonadati</taxon>
        <taxon>Pseudomonadota</taxon>
        <taxon>Betaproteobacteria</taxon>
        <taxon>Rhodocyclales</taxon>
        <taxon>Zoogloeaceae</taxon>
        <taxon>Azoarcus</taxon>
    </lineage>
</organism>